<keyword id="KW-0175">Coiled coil</keyword>
<keyword id="KW-0221">Differentiation</keyword>
<keyword id="KW-0238">DNA-binding</keyword>
<keyword id="KW-0371">Homeobox</keyword>
<keyword id="KW-0539">Nucleus</keyword>
<keyword id="KW-1185">Reference proteome</keyword>
<keyword id="KW-0804">Transcription</keyword>
<keyword id="KW-0805">Transcription regulation</keyword>
<reference key="1">
    <citation type="journal article" date="2003" name="Development">
        <title>Regulation of shoot epidermal cell differentiation by a pair of homeodomain proteins in Arabidopsis.</title>
        <authorList>
            <person name="Abe M."/>
            <person name="Katsumata H."/>
            <person name="Komeda Y."/>
            <person name="Takahashi T."/>
        </authorList>
    </citation>
    <scope>NUCLEOTIDE SEQUENCE [GENOMIC DNA]</scope>
    <scope>FUNCTION</scope>
    <scope>TISSUE SPECIFICITY</scope>
    <source>
        <strain>cv. Columbia</strain>
    </source>
</reference>
<reference key="2">
    <citation type="journal article" date="1999" name="Nature">
        <title>Sequence and analysis of chromosome 4 of the plant Arabidopsis thaliana.</title>
        <authorList>
            <person name="Mayer K.F.X."/>
            <person name="Schueller C."/>
            <person name="Wambutt R."/>
            <person name="Murphy G."/>
            <person name="Volckaert G."/>
            <person name="Pohl T."/>
            <person name="Duesterhoeft A."/>
            <person name="Stiekema W."/>
            <person name="Entian K.-D."/>
            <person name="Terryn N."/>
            <person name="Harris B."/>
            <person name="Ansorge W."/>
            <person name="Brandt P."/>
            <person name="Grivell L.A."/>
            <person name="Rieger M."/>
            <person name="Weichselgartner M."/>
            <person name="de Simone V."/>
            <person name="Obermaier B."/>
            <person name="Mache R."/>
            <person name="Mueller M."/>
            <person name="Kreis M."/>
            <person name="Delseny M."/>
            <person name="Puigdomenech P."/>
            <person name="Watson M."/>
            <person name="Schmidtheini T."/>
            <person name="Reichert B."/>
            <person name="Portetelle D."/>
            <person name="Perez-Alonso M."/>
            <person name="Boutry M."/>
            <person name="Bancroft I."/>
            <person name="Vos P."/>
            <person name="Hoheisel J."/>
            <person name="Zimmermann W."/>
            <person name="Wedler H."/>
            <person name="Ridley P."/>
            <person name="Langham S.-A."/>
            <person name="McCullagh B."/>
            <person name="Bilham L."/>
            <person name="Robben J."/>
            <person name="van der Schueren J."/>
            <person name="Grymonprez B."/>
            <person name="Chuang Y.-J."/>
            <person name="Vandenbussche F."/>
            <person name="Braeken M."/>
            <person name="Weltjens I."/>
            <person name="Voet M."/>
            <person name="Bastiaens I."/>
            <person name="Aert R."/>
            <person name="Defoor E."/>
            <person name="Weitzenegger T."/>
            <person name="Bothe G."/>
            <person name="Ramsperger U."/>
            <person name="Hilbert H."/>
            <person name="Braun M."/>
            <person name="Holzer E."/>
            <person name="Brandt A."/>
            <person name="Peters S."/>
            <person name="van Staveren M."/>
            <person name="Dirkse W."/>
            <person name="Mooijman P."/>
            <person name="Klein Lankhorst R."/>
            <person name="Rose M."/>
            <person name="Hauf J."/>
            <person name="Koetter P."/>
            <person name="Berneiser S."/>
            <person name="Hempel S."/>
            <person name="Feldpausch M."/>
            <person name="Lamberth S."/>
            <person name="Van den Daele H."/>
            <person name="De Keyser A."/>
            <person name="Buysshaert C."/>
            <person name="Gielen J."/>
            <person name="Villarroel R."/>
            <person name="De Clercq R."/>
            <person name="van Montagu M."/>
            <person name="Rogers J."/>
            <person name="Cronin A."/>
            <person name="Quail M.A."/>
            <person name="Bray-Allen S."/>
            <person name="Clark L."/>
            <person name="Doggett J."/>
            <person name="Hall S."/>
            <person name="Kay M."/>
            <person name="Lennard N."/>
            <person name="McLay K."/>
            <person name="Mayes R."/>
            <person name="Pettett A."/>
            <person name="Rajandream M.A."/>
            <person name="Lyne M."/>
            <person name="Benes V."/>
            <person name="Rechmann S."/>
            <person name="Borkova D."/>
            <person name="Bloecker H."/>
            <person name="Scharfe M."/>
            <person name="Grimm M."/>
            <person name="Loehnert T.-H."/>
            <person name="Dose S."/>
            <person name="de Haan M."/>
            <person name="Maarse A.C."/>
            <person name="Schaefer M."/>
            <person name="Mueller-Auer S."/>
            <person name="Gabel C."/>
            <person name="Fuchs M."/>
            <person name="Fartmann B."/>
            <person name="Granderath K."/>
            <person name="Dauner D."/>
            <person name="Herzl A."/>
            <person name="Neumann S."/>
            <person name="Argiriou A."/>
            <person name="Vitale D."/>
            <person name="Liguori R."/>
            <person name="Piravandi E."/>
            <person name="Massenet O."/>
            <person name="Quigley F."/>
            <person name="Clabauld G."/>
            <person name="Muendlein A."/>
            <person name="Felber R."/>
            <person name="Schnabl S."/>
            <person name="Hiller R."/>
            <person name="Schmidt W."/>
            <person name="Lecharny A."/>
            <person name="Aubourg S."/>
            <person name="Chefdor F."/>
            <person name="Cooke R."/>
            <person name="Berger C."/>
            <person name="Monfort A."/>
            <person name="Casacuberta E."/>
            <person name="Gibbons T."/>
            <person name="Weber N."/>
            <person name="Vandenbol M."/>
            <person name="Bargues M."/>
            <person name="Terol J."/>
            <person name="Torres A."/>
            <person name="Perez-Perez A."/>
            <person name="Purnelle B."/>
            <person name="Bent E."/>
            <person name="Johnson S."/>
            <person name="Tacon D."/>
            <person name="Jesse T."/>
            <person name="Heijnen L."/>
            <person name="Schwarz S."/>
            <person name="Scholler P."/>
            <person name="Heber S."/>
            <person name="Francs P."/>
            <person name="Bielke C."/>
            <person name="Frishman D."/>
            <person name="Haase D."/>
            <person name="Lemcke K."/>
            <person name="Mewes H.-W."/>
            <person name="Stocker S."/>
            <person name="Zaccaria P."/>
            <person name="Bevan M."/>
            <person name="Wilson R.K."/>
            <person name="de la Bastide M."/>
            <person name="Habermann K."/>
            <person name="Parnell L."/>
            <person name="Dedhia N."/>
            <person name="Gnoj L."/>
            <person name="Schutz K."/>
            <person name="Huang E."/>
            <person name="Spiegel L."/>
            <person name="Sekhon M."/>
            <person name="Murray J."/>
            <person name="Sheet P."/>
            <person name="Cordes M."/>
            <person name="Abu-Threideh J."/>
            <person name="Stoneking T."/>
            <person name="Kalicki J."/>
            <person name="Graves T."/>
            <person name="Harmon G."/>
            <person name="Edwards J."/>
            <person name="Latreille P."/>
            <person name="Courtney L."/>
            <person name="Cloud J."/>
            <person name="Abbott A."/>
            <person name="Scott K."/>
            <person name="Johnson D."/>
            <person name="Minx P."/>
            <person name="Bentley D."/>
            <person name="Fulton B."/>
            <person name="Miller N."/>
            <person name="Greco T."/>
            <person name="Kemp K."/>
            <person name="Kramer J."/>
            <person name="Fulton L."/>
            <person name="Mardis E."/>
            <person name="Dante M."/>
            <person name="Pepin K."/>
            <person name="Hillier L.W."/>
            <person name="Nelson J."/>
            <person name="Spieth J."/>
            <person name="Ryan E."/>
            <person name="Andrews S."/>
            <person name="Geisel C."/>
            <person name="Layman D."/>
            <person name="Du H."/>
            <person name="Ali J."/>
            <person name="Berghoff A."/>
            <person name="Jones K."/>
            <person name="Drone K."/>
            <person name="Cotton M."/>
            <person name="Joshu C."/>
            <person name="Antonoiu B."/>
            <person name="Zidanic M."/>
            <person name="Strong C."/>
            <person name="Sun H."/>
            <person name="Lamar B."/>
            <person name="Yordan C."/>
            <person name="Ma P."/>
            <person name="Zhong J."/>
            <person name="Preston R."/>
            <person name="Vil D."/>
            <person name="Shekher M."/>
            <person name="Matero A."/>
            <person name="Shah R."/>
            <person name="Swaby I.K."/>
            <person name="O'Shaughnessy A."/>
            <person name="Rodriguez M."/>
            <person name="Hoffman J."/>
            <person name="Till S."/>
            <person name="Granat S."/>
            <person name="Shohdy N."/>
            <person name="Hasegawa A."/>
            <person name="Hameed A."/>
            <person name="Lodhi M."/>
            <person name="Johnson A."/>
            <person name="Chen E."/>
            <person name="Marra M.A."/>
            <person name="Martienssen R."/>
            <person name="McCombie W.R."/>
        </authorList>
    </citation>
    <scope>NUCLEOTIDE SEQUENCE [LARGE SCALE GENOMIC DNA]</scope>
    <source>
        <strain>cv. Columbia</strain>
    </source>
</reference>
<reference key="3">
    <citation type="journal article" date="2017" name="Plant J.">
        <title>Araport11: a complete reannotation of the Arabidopsis thaliana reference genome.</title>
        <authorList>
            <person name="Cheng C.Y."/>
            <person name="Krishnakumar V."/>
            <person name="Chan A.P."/>
            <person name="Thibaud-Nissen F."/>
            <person name="Schobel S."/>
            <person name="Town C.D."/>
        </authorList>
    </citation>
    <scope>GENOME REANNOTATION</scope>
    <source>
        <strain>cv. Columbia</strain>
    </source>
</reference>
<reference key="4">
    <citation type="journal article" date="2003" name="Science">
        <title>Empirical analysis of transcriptional activity in the Arabidopsis genome.</title>
        <authorList>
            <person name="Yamada K."/>
            <person name="Lim J."/>
            <person name="Dale J.M."/>
            <person name="Chen H."/>
            <person name="Shinn P."/>
            <person name="Palm C.J."/>
            <person name="Southwick A.M."/>
            <person name="Wu H.C."/>
            <person name="Kim C.J."/>
            <person name="Nguyen M."/>
            <person name="Pham P.K."/>
            <person name="Cheuk R.F."/>
            <person name="Karlin-Newmann G."/>
            <person name="Liu S.X."/>
            <person name="Lam B."/>
            <person name="Sakano H."/>
            <person name="Wu T."/>
            <person name="Yu G."/>
            <person name="Miranda M."/>
            <person name="Quach H.L."/>
            <person name="Tripp M."/>
            <person name="Chang C.H."/>
            <person name="Lee J.M."/>
            <person name="Toriumi M.J."/>
            <person name="Chan M.M."/>
            <person name="Tang C.C."/>
            <person name="Onodera C.S."/>
            <person name="Deng J.M."/>
            <person name="Akiyama K."/>
            <person name="Ansari Y."/>
            <person name="Arakawa T."/>
            <person name="Banh J."/>
            <person name="Banno F."/>
            <person name="Bowser L."/>
            <person name="Brooks S.Y."/>
            <person name="Carninci P."/>
            <person name="Chao Q."/>
            <person name="Choy N."/>
            <person name="Enju A."/>
            <person name="Goldsmith A.D."/>
            <person name="Gurjal M."/>
            <person name="Hansen N.F."/>
            <person name="Hayashizaki Y."/>
            <person name="Johnson-Hopson C."/>
            <person name="Hsuan V.W."/>
            <person name="Iida K."/>
            <person name="Karnes M."/>
            <person name="Khan S."/>
            <person name="Koesema E."/>
            <person name="Ishida J."/>
            <person name="Jiang P.X."/>
            <person name="Jones T."/>
            <person name="Kawai J."/>
            <person name="Kamiya A."/>
            <person name="Meyers C."/>
            <person name="Nakajima M."/>
            <person name="Narusaka M."/>
            <person name="Seki M."/>
            <person name="Sakurai T."/>
            <person name="Satou M."/>
            <person name="Tamse R."/>
            <person name="Vaysberg M."/>
            <person name="Wallender E.K."/>
            <person name="Wong C."/>
            <person name="Yamamura Y."/>
            <person name="Yuan S."/>
            <person name="Shinozaki K."/>
            <person name="Davis R.W."/>
            <person name="Theologis A."/>
            <person name="Ecker J.R."/>
        </authorList>
    </citation>
    <scope>NUCLEOTIDE SEQUENCE [LARGE SCALE MRNA]</scope>
    <source>
        <strain>cv. Columbia</strain>
    </source>
</reference>
<reference key="5">
    <citation type="journal article" date="2000" name="Plant Mol. Biol.">
        <title>Organization and structural evolution of four multigene families in Arabidopsis thaliana: AtLCAD, AtLGT, AtMYST and AtHD-GL2.</title>
        <authorList>
            <person name="Tavares R."/>
            <person name="Aubourg S."/>
            <person name="Lecharny A."/>
            <person name="Kreis M."/>
        </authorList>
    </citation>
    <scope>GENE FAMILY</scope>
</reference>
<reference key="6">
    <citation type="journal article" date="2006" name="Plant Physiol.">
        <title>Characterization of the class IV homeodomain-leucine zipper gene family in Arabidopsis.</title>
        <authorList>
            <person name="Nakamura M."/>
            <person name="Katsumata H."/>
            <person name="Abe M."/>
            <person name="Yabe N."/>
            <person name="Komeda Y."/>
            <person name="Yamamoto K.T."/>
            <person name="Takahashi T."/>
        </authorList>
    </citation>
    <scope>GENE FAMILY</scope>
    <scope>NOMENCLATURE</scope>
</reference>
<reference key="7">
    <citation type="journal article" date="2013" name="Plant J.">
        <title>Mutations in epidermis-specific HD-ZIP IV genes affect floral organ identity in Arabidopsis thaliana.</title>
        <authorList>
            <person name="Kamata N."/>
            <person name="Okada H."/>
            <person name="Komeda Y."/>
            <person name="Takahashi T."/>
        </authorList>
    </citation>
    <scope>FUNCTION</scope>
    <scope>DISRUPTION PHENOTYPE</scope>
    <source>
        <strain>cv. Columbia</strain>
    </source>
</reference>
<reference key="8">
    <citation type="journal article" date="2014" name="Plant Cell">
        <title>Arabidopsis DELLA and two HD-ZIP transcription factors regulate GA signaling in the epidermis through the L1 box cis-element.</title>
        <authorList>
            <person name="Rombola-Caldentey B."/>
            <person name="Rueda-Romero P."/>
            <person name="Iglesias-Fernandez R."/>
            <person name="Carbonero P."/>
            <person name="Onate-Sanchez L."/>
        </authorList>
    </citation>
    <scope>FUNCTION</scope>
    <scope>DISRUPTION PHENOTYPE</scope>
    <scope>INDUCTION BY IMBIBITION</scope>
    <scope>INTERACTION WITH GAI/RGA2; RGA/RGA1/GRS; RGL2/SCL19 AND ATML1</scope>
    <source>
        <strain>cv. Columbia</strain>
        <strain>cv. Landsberg erecta</strain>
    </source>
</reference>
<reference key="9">
    <citation type="journal article" date="2015" name="Development">
        <title>AIL and HDG proteins act antagonistically to control cell proliferation.</title>
        <authorList>
            <person name="Horstman A."/>
            <person name="Fukuoka H."/>
            <person name="Muino J.M."/>
            <person name="Nitsch L."/>
            <person name="Guo C."/>
            <person name="Passarinho P."/>
            <person name="Sanchez-Perez G."/>
            <person name="Immink R."/>
            <person name="Angenent G."/>
            <person name="Boutilier K."/>
        </authorList>
    </citation>
    <scope>FUNCTION</scope>
    <scope>DISRUPTION PHENOTYPE</scope>
    <scope>INTERACTION WITH AIL7/PLT7; ANT; BBM AND AIL1</scope>
    <source>
        <strain>cv. Columbia</strain>
    </source>
</reference>
<comment type="function">
    <text evidence="5 6 7 8">Probable transcription factor that binds to the L1 box DNA sequence 5'-TAAATG[CT]A-3'. Plays a role in maintaining the identity of L1 cells, possibly by interacting with their L1 box or other target-gene promoters; binds to the LIP1 gene promoter and stimulates its expression upon imbibition (PubMed:24989044). Acts as a positive regulator of gibberellins (GAs)-regulated epidermal gene expression (e.g. LIP1, LIP2, LTP1, FDH and PDF1) (PubMed:24989044). Functionally redundant to ATML1 (PubMed:24989044). Involved, together with HDG proteins (e.g. HDG1, HDG2, HDG5 and HDG12), in the regulation of flower organs development by promoting the expression of APETALA 3 (AP3) in the epidermis and internal cell layers of developing flowers (PubMed:23590515). Seems to promote cell differentiation (PubMed:25564655).</text>
</comment>
<comment type="subunit">
    <text evidence="7 8">Interacts with GAI/RGA2, RGA/RGA1/GRS, RGL2/SCL19 and ATML1 (PubMed:24989044). Binds to AIL7/PLT7, ANT, BBM and AIL1 (PubMed:25564655).</text>
</comment>
<comment type="subcellular location">
    <subcellularLocation>
        <location evidence="10">Nucleus</location>
    </subcellularLocation>
</comment>
<comment type="tissue specificity">
    <text evidence="5">Specifically expressed in the layer 1 (L1) of shoot meristems.</text>
</comment>
<comment type="induction">
    <text evidence="7">Stimulated during seed imbibition (PubMed:24989044). Induced by gibberellins (GAs) and repressed by DELLA proteins in an ATML1- and PDF2-dependent manner (PubMed:24989044). Upon seed imbibition, increased GA levels in the epidermis reduce DELLA proteins (e.g. GAI/RGA2, RGA/RGA1/GRS and RGL2/SCL19) abundance and release, in turn, ATML1 and PDF2 which activate LIP1 expression, thus enhancing germination potential (PubMed:24989044).</text>
</comment>
<comment type="disruption phenotype">
    <text evidence="6 7 8">Plants missing both PDF2 and ATML1 have reduced levels of L1 box/ gibberellic acid (GA)-regulated putative targets, including LIP1, LIP2, LTP1, FDH and PDF1, in the presence of GA and during seed germination, thus leading to a delayed germination upon imbibition (PubMed:24989044). Double mutants pdf2-1 hdg1-1, pdf2-1 hdg2-3, pdf2-1 hdg5-1 and pdf2-1 hdg12-2 exhibit abnormal flowers with sepaloid petals and carpelloid stamens in association with a reduced expression of APETALA 3 (AP3) (PubMed:23590515). In plants missing HDG3, HDG7, HDG11, PDF2 and ATML1, increased cell division leading to cell overproliferation (PubMed:25564655).</text>
</comment>
<comment type="similarity">
    <text evidence="10">Belongs to the HD-ZIP homeobox family. Class IV subfamily.</text>
</comment>
<comment type="sequence caution" evidence="10">
    <conflict type="erroneous gene model prediction">
        <sequence resource="EMBL-CDS" id="AAD17342"/>
    </conflict>
</comment>
<comment type="sequence caution" evidence="10">
    <conflict type="erroneous initiation">
        <sequence resource="EMBL-CDS" id="CAB81031"/>
    </conflict>
    <text>Truncated N-terminus.</text>
</comment>
<gene>
    <name evidence="9" type="primary">PDF2</name>
    <name evidence="11" type="ordered locus">At4g04890</name>
    <name evidence="12" type="ORF">T1J1.3</name>
</gene>
<protein>
    <recommendedName>
        <fullName evidence="9">Homeobox-leucine zipper protein PROTODERMAL FACTOR 2</fullName>
    </recommendedName>
    <alternativeName>
        <fullName evidence="9">HD-ZIP protein PDF2</fullName>
    </alternativeName>
    <alternativeName>
        <fullName evidence="9">Homeodomain transcription factor PDF2</fullName>
    </alternativeName>
</protein>
<feature type="chain" id="PRO_0000331735" description="Homeobox-leucine zipper protein PROTODERMAL FACTOR 2">
    <location>
        <begin position="1"/>
        <end position="743"/>
    </location>
</feature>
<feature type="domain" description="START" evidence="3">
    <location>
        <begin position="244"/>
        <end position="476"/>
    </location>
</feature>
<feature type="DNA-binding region" description="Homeobox" evidence="2">
    <location>
        <begin position="62"/>
        <end position="121"/>
    </location>
</feature>
<feature type="region of interest" description="Disordered" evidence="4">
    <location>
        <begin position="1"/>
        <end position="72"/>
    </location>
</feature>
<feature type="coiled-coil region" evidence="1">
    <location>
        <begin position="110"/>
        <end position="192"/>
    </location>
</feature>
<feature type="compositionally biased region" description="Basic and acidic residues" evidence="4">
    <location>
        <begin position="30"/>
        <end position="39"/>
    </location>
</feature>
<feature type="compositionally biased region" description="Basic residues" evidence="4">
    <location>
        <begin position="60"/>
        <end position="71"/>
    </location>
</feature>
<evidence type="ECO:0000255" key="1"/>
<evidence type="ECO:0000255" key="2">
    <source>
        <dbReference type="PROSITE-ProRule" id="PRU00108"/>
    </source>
</evidence>
<evidence type="ECO:0000255" key="3">
    <source>
        <dbReference type="PROSITE-ProRule" id="PRU00197"/>
    </source>
</evidence>
<evidence type="ECO:0000256" key="4">
    <source>
        <dbReference type="SAM" id="MobiDB-lite"/>
    </source>
</evidence>
<evidence type="ECO:0000269" key="5">
    <source>
    </source>
</evidence>
<evidence type="ECO:0000269" key="6">
    <source>
    </source>
</evidence>
<evidence type="ECO:0000269" key="7">
    <source>
    </source>
</evidence>
<evidence type="ECO:0000269" key="8">
    <source>
    </source>
</evidence>
<evidence type="ECO:0000303" key="9">
    <source>
    </source>
</evidence>
<evidence type="ECO:0000305" key="10"/>
<evidence type="ECO:0000312" key="11">
    <source>
        <dbReference type="Araport" id="AT4G04890"/>
    </source>
</evidence>
<evidence type="ECO:0000312" key="12">
    <source>
        <dbReference type="EMBL" id="AAD17342.1"/>
    </source>
</evidence>
<name>PDF2_ARATH</name>
<accession>Q93V99</accession>
<accession>Q9M0Z0</accession>
<accession>Q9ZPH7</accession>
<dbReference type="EMBL" id="AB056455">
    <property type="protein sequence ID" value="BAB58961.1"/>
    <property type="molecule type" value="Genomic_DNA"/>
</dbReference>
<dbReference type="EMBL" id="AF128393">
    <property type="protein sequence ID" value="AAD17342.1"/>
    <property type="status" value="ALT_SEQ"/>
    <property type="molecule type" value="Genomic_DNA"/>
</dbReference>
<dbReference type="EMBL" id="AL161502">
    <property type="protein sequence ID" value="CAB81031.1"/>
    <property type="status" value="ALT_INIT"/>
    <property type="molecule type" value="Genomic_DNA"/>
</dbReference>
<dbReference type="EMBL" id="CP002687">
    <property type="protein sequence ID" value="AEE82438.1"/>
    <property type="molecule type" value="Genomic_DNA"/>
</dbReference>
<dbReference type="EMBL" id="CP002687">
    <property type="protein sequence ID" value="ANM67658.1"/>
    <property type="molecule type" value="Genomic_DNA"/>
</dbReference>
<dbReference type="EMBL" id="AF424560">
    <property type="protein sequence ID" value="AAL11554.1"/>
    <property type="molecule type" value="mRNA"/>
</dbReference>
<dbReference type="EMBL" id="AY062575">
    <property type="protein sequence ID" value="AAL32653.1"/>
    <property type="molecule type" value="mRNA"/>
</dbReference>
<dbReference type="EMBL" id="BT000144">
    <property type="protein sequence ID" value="AAN15463.1"/>
    <property type="molecule type" value="mRNA"/>
</dbReference>
<dbReference type="PIR" id="E85061">
    <property type="entry name" value="E85061"/>
</dbReference>
<dbReference type="RefSeq" id="NP_001329475.1">
    <property type="nucleotide sequence ID" value="NM_001340517.1"/>
</dbReference>
<dbReference type="RefSeq" id="NP_567274.1">
    <property type="nucleotide sequence ID" value="NM_116727.4"/>
</dbReference>
<dbReference type="SMR" id="Q93V99"/>
<dbReference type="BioGRID" id="11139">
    <property type="interactions" value="8"/>
</dbReference>
<dbReference type="FunCoup" id="Q93V99">
    <property type="interactions" value="1162"/>
</dbReference>
<dbReference type="IntAct" id="Q93V99">
    <property type="interactions" value="5"/>
</dbReference>
<dbReference type="STRING" id="3702.Q93V99"/>
<dbReference type="BindingDB" id="Q93V99"/>
<dbReference type="ChEMBL" id="CHEMBL5291530"/>
<dbReference type="iPTMnet" id="Q93V99"/>
<dbReference type="PaxDb" id="3702-AT4G04890.1"/>
<dbReference type="ProteomicsDB" id="236380"/>
<dbReference type="EnsemblPlants" id="AT4G04890.1">
    <property type="protein sequence ID" value="AT4G04890.1"/>
    <property type="gene ID" value="AT4G04890"/>
</dbReference>
<dbReference type="EnsemblPlants" id="AT4G04890.2">
    <property type="protein sequence ID" value="AT4G04890.2"/>
    <property type="gene ID" value="AT4G04890"/>
</dbReference>
<dbReference type="GeneID" id="825828"/>
<dbReference type="Gramene" id="AT4G04890.1">
    <property type="protein sequence ID" value="AT4G04890.1"/>
    <property type="gene ID" value="AT4G04890"/>
</dbReference>
<dbReference type="Gramene" id="AT4G04890.2">
    <property type="protein sequence ID" value="AT4G04890.2"/>
    <property type="gene ID" value="AT4G04890"/>
</dbReference>
<dbReference type="KEGG" id="ath:AT4G04890"/>
<dbReference type="Araport" id="AT4G04890"/>
<dbReference type="TAIR" id="AT4G04890">
    <property type="gene designation" value="PDF2"/>
</dbReference>
<dbReference type="eggNOG" id="ENOG502QU3P">
    <property type="taxonomic scope" value="Eukaryota"/>
</dbReference>
<dbReference type="HOGENOM" id="CLU_015002_2_1_1"/>
<dbReference type="InParanoid" id="Q93V99"/>
<dbReference type="OMA" id="QCPHPDD"/>
<dbReference type="PhylomeDB" id="Q93V99"/>
<dbReference type="PRO" id="PR:Q93V99"/>
<dbReference type="Proteomes" id="UP000006548">
    <property type="component" value="Chromosome 4"/>
</dbReference>
<dbReference type="ExpressionAtlas" id="Q93V99">
    <property type="expression patterns" value="baseline and differential"/>
</dbReference>
<dbReference type="GO" id="GO:0005634">
    <property type="term" value="C:nucleus"/>
    <property type="evidence" value="ECO:0000314"/>
    <property type="project" value="TAIR"/>
</dbReference>
<dbReference type="GO" id="GO:0003677">
    <property type="term" value="F:DNA binding"/>
    <property type="evidence" value="ECO:0000314"/>
    <property type="project" value="TAIR"/>
</dbReference>
<dbReference type="GO" id="GO:0003700">
    <property type="term" value="F:DNA-binding transcription factor activity"/>
    <property type="evidence" value="ECO:0000250"/>
    <property type="project" value="TAIR"/>
</dbReference>
<dbReference type="GO" id="GO:0000981">
    <property type="term" value="F:DNA-binding transcription factor activity, RNA polymerase II-specific"/>
    <property type="evidence" value="ECO:0007669"/>
    <property type="project" value="InterPro"/>
</dbReference>
<dbReference type="GO" id="GO:0008289">
    <property type="term" value="F:lipid binding"/>
    <property type="evidence" value="ECO:0007669"/>
    <property type="project" value="InterPro"/>
</dbReference>
<dbReference type="GO" id="GO:0000976">
    <property type="term" value="F:transcription cis-regulatory region binding"/>
    <property type="evidence" value="ECO:0000353"/>
    <property type="project" value="TAIR"/>
</dbReference>
<dbReference type="GO" id="GO:0030154">
    <property type="term" value="P:cell differentiation"/>
    <property type="evidence" value="ECO:0000315"/>
    <property type="project" value="UniProtKB"/>
</dbReference>
<dbReference type="GO" id="GO:0048825">
    <property type="term" value="P:cotyledon development"/>
    <property type="evidence" value="ECO:0000316"/>
    <property type="project" value="TAIR"/>
</dbReference>
<dbReference type="GO" id="GO:0009913">
    <property type="term" value="P:epidermal cell differentiation"/>
    <property type="evidence" value="ECO:0000315"/>
    <property type="project" value="TAIR"/>
</dbReference>
<dbReference type="GO" id="GO:0048497">
    <property type="term" value="P:maintenance of floral organ identity"/>
    <property type="evidence" value="ECO:0000315"/>
    <property type="project" value="UniProtKB"/>
</dbReference>
<dbReference type="GO" id="GO:2000033">
    <property type="term" value="P:regulation of seed dormancy process"/>
    <property type="evidence" value="ECO:0000270"/>
    <property type="project" value="UniProtKB"/>
</dbReference>
<dbReference type="GO" id="GO:0010029">
    <property type="term" value="P:regulation of seed germination"/>
    <property type="evidence" value="ECO:0000270"/>
    <property type="project" value="UniProtKB"/>
</dbReference>
<dbReference type="GO" id="GO:0009845">
    <property type="term" value="P:seed germination"/>
    <property type="evidence" value="ECO:0000315"/>
    <property type="project" value="TAIR"/>
</dbReference>
<dbReference type="CDD" id="cd00086">
    <property type="entry name" value="homeodomain"/>
    <property type="match status" value="1"/>
</dbReference>
<dbReference type="CDD" id="cd08875">
    <property type="entry name" value="START_ArGLABRA2_like"/>
    <property type="match status" value="1"/>
</dbReference>
<dbReference type="FunFam" id="3.30.530.20:FF:000026">
    <property type="entry name" value="Homeobox-leucine zipper protein GLABRA 2"/>
    <property type="match status" value="1"/>
</dbReference>
<dbReference type="FunFam" id="1.10.10.60:FF:000229">
    <property type="entry name" value="Homeobox-leucine zipper protein HDG1"/>
    <property type="match status" value="1"/>
</dbReference>
<dbReference type="Gene3D" id="3.30.530.20">
    <property type="match status" value="1"/>
</dbReference>
<dbReference type="Gene3D" id="1.10.10.60">
    <property type="entry name" value="Homeodomain-like"/>
    <property type="match status" value="1"/>
</dbReference>
<dbReference type="InterPro" id="IPR042160">
    <property type="entry name" value="GLABRA2/ANL2/PDF2/ATML1-like"/>
</dbReference>
<dbReference type="InterPro" id="IPR001356">
    <property type="entry name" value="HD"/>
</dbReference>
<dbReference type="InterPro" id="IPR017970">
    <property type="entry name" value="Homeobox_CS"/>
</dbReference>
<dbReference type="InterPro" id="IPR009057">
    <property type="entry name" value="Homeodomain-like_sf"/>
</dbReference>
<dbReference type="InterPro" id="IPR023393">
    <property type="entry name" value="START-like_dom_sf"/>
</dbReference>
<dbReference type="InterPro" id="IPR002913">
    <property type="entry name" value="START_lipid-bd_dom"/>
</dbReference>
<dbReference type="PANTHER" id="PTHR45654">
    <property type="entry name" value="HOMEOBOX-LEUCINE ZIPPER PROTEIN MERISTEM L1"/>
    <property type="match status" value="1"/>
</dbReference>
<dbReference type="PANTHER" id="PTHR45654:SF98">
    <property type="entry name" value="HOMEOBOX-LEUCINE ZIPPER PROTEIN PROTODERMAL FACTOR 2"/>
    <property type="match status" value="1"/>
</dbReference>
<dbReference type="Pfam" id="PF00046">
    <property type="entry name" value="Homeodomain"/>
    <property type="match status" value="1"/>
</dbReference>
<dbReference type="Pfam" id="PF01852">
    <property type="entry name" value="START"/>
    <property type="match status" value="1"/>
</dbReference>
<dbReference type="SMART" id="SM00389">
    <property type="entry name" value="HOX"/>
    <property type="match status" value="1"/>
</dbReference>
<dbReference type="SMART" id="SM00234">
    <property type="entry name" value="START"/>
    <property type="match status" value="1"/>
</dbReference>
<dbReference type="SUPFAM" id="SSF55961">
    <property type="entry name" value="Bet v1-like"/>
    <property type="match status" value="2"/>
</dbReference>
<dbReference type="SUPFAM" id="SSF46689">
    <property type="entry name" value="Homeodomain-like"/>
    <property type="match status" value="1"/>
</dbReference>
<dbReference type="PROSITE" id="PS00027">
    <property type="entry name" value="HOMEOBOX_1"/>
    <property type="match status" value="1"/>
</dbReference>
<dbReference type="PROSITE" id="PS50071">
    <property type="entry name" value="HOMEOBOX_2"/>
    <property type="match status" value="1"/>
</dbReference>
<dbReference type="PROSITE" id="PS50848">
    <property type="entry name" value="START"/>
    <property type="match status" value="1"/>
</dbReference>
<sequence>MYHPNMFESHHMFDMTPKSTSDNDLGITGSREDDFETKSGTEVTTENPSGEELQDPSQRPNKKKRYHRHTQRQIQELESFFKECPHPDDKQRKELSRDLNLEPLQVKFWFQNKRTQMKAQSERHENQILKSDNDKLRAENNRYKEALSNATCPNCGGPAAIGEMSFDEQHLRIENARLREEIDRISAIAAKYVGKPLGSSFAPLAIHAPSRSLDLEVGNFGNQTGFVGEMYGTGDILRSVSIPSETDKPIIVELAVAAMEELVRMAQTGDPLWLSTDNSVEILNEEEYFRTFPRGIGPKPLGLRSEASRQSAVVIMNHINLVEILMDVNQWSCVFSGIVSRALTLEVLSTGVAGNYNGALQVMTAEFQVPSPLVPTRENYFVRYCKQHSDGSWAVVDVSLDSLRPSTPILRTRRRPSGCLIQELPNGYSKVTWIEHMEVDDRSVHNMYKPLVQSGLAFGAKRWVATLERQCERLASSMASNIPGDLSVITSPEGRKSMLKLAERMVMSFCSGVGASTAHAWTTMSTTGSDDVRVMTRKSMDDPGRPPGIVLSAATSFWIPVAPKRVFDFLRDENSRKEWDILSNGGMVQEMAHIANGHEPGNCVSLLRVNSGNSSQSNMLILQESCTDASGSYVIYAPVDIVAMNVVLSGGDPDYVALLPSGFAILPDGSVGGGDGNQHQEMVSTTSSGSCGGSLLTVAFQILVDSVPTAKLSLGSVATVNSLIKCTVERIKAAVSCDVGGGA</sequence>
<organism>
    <name type="scientific">Arabidopsis thaliana</name>
    <name type="common">Mouse-ear cress</name>
    <dbReference type="NCBI Taxonomy" id="3702"/>
    <lineage>
        <taxon>Eukaryota</taxon>
        <taxon>Viridiplantae</taxon>
        <taxon>Streptophyta</taxon>
        <taxon>Embryophyta</taxon>
        <taxon>Tracheophyta</taxon>
        <taxon>Spermatophyta</taxon>
        <taxon>Magnoliopsida</taxon>
        <taxon>eudicotyledons</taxon>
        <taxon>Gunneridae</taxon>
        <taxon>Pentapetalae</taxon>
        <taxon>rosids</taxon>
        <taxon>malvids</taxon>
        <taxon>Brassicales</taxon>
        <taxon>Brassicaceae</taxon>
        <taxon>Camelineae</taxon>
        <taxon>Arabidopsis</taxon>
    </lineage>
</organism>
<proteinExistence type="evidence at protein level"/>